<proteinExistence type="inferred from homology"/>
<feature type="chain" id="PRO_0000369937" description="Serine hydroxymethyltransferase">
    <location>
        <begin position="1"/>
        <end position="415"/>
    </location>
</feature>
<feature type="binding site" evidence="1">
    <location>
        <position position="121"/>
    </location>
    <ligand>
        <name>(6S)-5,6,7,8-tetrahydrofolate</name>
        <dbReference type="ChEBI" id="CHEBI:57453"/>
    </ligand>
</feature>
<feature type="binding site" evidence="1">
    <location>
        <begin position="125"/>
        <end position="127"/>
    </location>
    <ligand>
        <name>(6S)-5,6,7,8-tetrahydrofolate</name>
        <dbReference type="ChEBI" id="CHEBI:57453"/>
    </ligand>
</feature>
<feature type="binding site" evidence="1">
    <location>
        <begin position="352"/>
        <end position="354"/>
    </location>
    <ligand>
        <name>(6S)-5,6,7,8-tetrahydrofolate</name>
        <dbReference type="ChEBI" id="CHEBI:57453"/>
    </ligand>
</feature>
<feature type="site" description="Plays an important role in substrate specificity" evidence="1">
    <location>
        <position position="228"/>
    </location>
</feature>
<feature type="modified residue" description="N6-(pyridoxal phosphate)lysine" evidence="1">
    <location>
        <position position="229"/>
    </location>
</feature>
<keyword id="KW-0028">Amino-acid biosynthesis</keyword>
<keyword id="KW-0963">Cytoplasm</keyword>
<keyword id="KW-0554">One-carbon metabolism</keyword>
<keyword id="KW-0663">Pyridoxal phosphate</keyword>
<keyword id="KW-1185">Reference proteome</keyword>
<keyword id="KW-0808">Transferase</keyword>
<gene>
    <name evidence="1" type="primary">glyA</name>
    <name type="ordered locus">Mfla_1917</name>
</gene>
<comment type="function">
    <text evidence="1">Catalyzes the reversible interconversion of serine and glycine with tetrahydrofolate (THF) serving as the one-carbon carrier. This reaction serves as the major source of one-carbon groups required for the biosynthesis of purines, thymidylate, methionine, and other important biomolecules. Also exhibits THF-independent aldolase activity toward beta-hydroxyamino acids, producing glycine and aldehydes, via a retro-aldol mechanism.</text>
</comment>
<comment type="catalytic activity">
    <reaction evidence="1">
        <text>(6R)-5,10-methylene-5,6,7,8-tetrahydrofolate + glycine + H2O = (6S)-5,6,7,8-tetrahydrofolate + L-serine</text>
        <dbReference type="Rhea" id="RHEA:15481"/>
        <dbReference type="ChEBI" id="CHEBI:15377"/>
        <dbReference type="ChEBI" id="CHEBI:15636"/>
        <dbReference type="ChEBI" id="CHEBI:33384"/>
        <dbReference type="ChEBI" id="CHEBI:57305"/>
        <dbReference type="ChEBI" id="CHEBI:57453"/>
        <dbReference type="EC" id="2.1.2.1"/>
    </reaction>
</comment>
<comment type="cofactor">
    <cofactor evidence="1">
        <name>pyridoxal 5'-phosphate</name>
        <dbReference type="ChEBI" id="CHEBI:597326"/>
    </cofactor>
</comment>
<comment type="pathway">
    <text evidence="1">One-carbon metabolism; tetrahydrofolate interconversion.</text>
</comment>
<comment type="pathway">
    <text evidence="1">Amino-acid biosynthesis; glycine biosynthesis; glycine from L-serine: step 1/1.</text>
</comment>
<comment type="subunit">
    <text evidence="1">Homodimer.</text>
</comment>
<comment type="subcellular location">
    <subcellularLocation>
        <location evidence="1">Cytoplasm</location>
    </subcellularLocation>
</comment>
<comment type="similarity">
    <text evidence="1">Belongs to the SHMT family.</text>
</comment>
<comment type="sequence caution" evidence="2">
    <conflict type="erroneous initiation">
        <sequence resource="EMBL-CDS" id="ABE50184"/>
    </conflict>
</comment>
<organism>
    <name type="scientific">Methylobacillus flagellatus (strain ATCC 51484 / DSM 6875 / VKM B-1610 / KT)</name>
    <dbReference type="NCBI Taxonomy" id="265072"/>
    <lineage>
        <taxon>Bacteria</taxon>
        <taxon>Pseudomonadati</taxon>
        <taxon>Pseudomonadota</taxon>
        <taxon>Betaproteobacteria</taxon>
        <taxon>Nitrosomonadales</taxon>
        <taxon>Methylophilaceae</taxon>
        <taxon>Methylobacillus</taxon>
    </lineage>
</organism>
<dbReference type="EC" id="2.1.2.1" evidence="1"/>
<dbReference type="EMBL" id="CP000284">
    <property type="protein sequence ID" value="ABE50184.1"/>
    <property type="status" value="ALT_INIT"/>
    <property type="molecule type" value="Genomic_DNA"/>
</dbReference>
<dbReference type="RefSeq" id="WP_048811676.1">
    <property type="nucleotide sequence ID" value="NC_007947.1"/>
</dbReference>
<dbReference type="SMR" id="Q1H003"/>
<dbReference type="STRING" id="265072.Mfla_1917"/>
<dbReference type="KEGG" id="mfa:Mfla_1917"/>
<dbReference type="eggNOG" id="COG0112">
    <property type="taxonomic scope" value="Bacteria"/>
</dbReference>
<dbReference type="HOGENOM" id="CLU_022477_2_1_4"/>
<dbReference type="OrthoDB" id="9803846at2"/>
<dbReference type="UniPathway" id="UPA00193"/>
<dbReference type="UniPathway" id="UPA00288">
    <property type="reaction ID" value="UER01023"/>
</dbReference>
<dbReference type="Proteomes" id="UP000002440">
    <property type="component" value="Chromosome"/>
</dbReference>
<dbReference type="GO" id="GO:0005829">
    <property type="term" value="C:cytosol"/>
    <property type="evidence" value="ECO:0007669"/>
    <property type="project" value="TreeGrafter"/>
</dbReference>
<dbReference type="GO" id="GO:0004372">
    <property type="term" value="F:glycine hydroxymethyltransferase activity"/>
    <property type="evidence" value="ECO:0007669"/>
    <property type="project" value="UniProtKB-UniRule"/>
</dbReference>
<dbReference type="GO" id="GO:0030170">
    <property type="term" value="F:pyridoxal phosphate binding"/>
    <property type="evidence" value="ECO:0007669"/>
    <property type="project" value="UniProtKB-UniRule"/>
</dbReference>
<dbReference type="GO" id="GO:0019264">
    <property type="term" value="P:glycine biosynthetic process from serine"/>
    <property type="evidence" value="ECO:0007669"/>
    <property type="project" value="UniProtKB-UniRule"/>
</dbReference>
<dbReference type="GO" id="GO:0035999">
    <property type="term" value="P:tetrahydrofolate interconversion"/>
    <property type="evidence" value="ECO:0007669"/>
    <property type="project" value="UniProtKB-UniRule"/>
</dbReference>
<dbReference type="CDD" id="cd00378">
    <property type="entry name" value="SHMT"/>
    <property type="match status" value="1"/>
</dbReference>
<dbReference type="FunFam" id="3.40.640.10:FF:000001">
    <property type="entry name" value="Serine hydroxymethyltransferase"/>
    <property type="match status" value="1"/>
</dbReference>
<dbReference type="FunFam" id="3.90.1150.10:FF:000003">
    <property type="entry name" value="Serine hydroxymethyltransferase"/>
    <property type="match status" value="1"/>
</dbReference>
<dbReference type="Gene3D" id="3.90.1150.10">
    <property type="entry name" value="Aspartate Aminotransferase, domain 1"/>
    <property type="match status" value="1"/>
</dbReference>
<dbReference type="Gene3D" id="3.40.640.10">
    <property type="entry name" value="Type I PLP-dependent aspartate aminotransferase-like (Major domain)"/>
    <property type="match status" value="1"/>
</dbReference>
<dbReference type="HAMAP" id="MF_00051">
    <property type="entry name" value="SHMT"/>
    <property type="match status" value="1"/>
</dbReference>
<dbReference type="InterPro" id="IPR015424">
    <property type="entry name" value="PyrdxlP-dep_Trfase"/>
</dbReference>
<dbReference type="InterPro" id="IPR015421">
    <property type="entry name" value="PyrdxlP-dep_Trfase_major"/>
</dbReference>
<dbReference type="InterPro" id="IPR015422">
    <property type="entry name" value="PyrdxlP-dep_Trfase_small"/>
</dbReference>
<dbReference type="InterPro" id="IPR001085">
    <property type="entry name" value="Ser_HO-MeTrfase"/>
</dbReference>
<dbReference type="InterPro" id="IPR049943">
    <property type="entry name" value="Ser_HO-MeTrfase-like"/>
</dbReference>
<dbReference type="InterPro" id="IPR019798">
    <property type="entry name" value="Ser_HO-MeTrfase_PLP_BS"/>
</dbReference>
<dbReference type="InterPro" id="IPR039429">
    <property type="entry name" value="SHMT-like_dom"/>
</dbReference>
<dbReference type="NCBIfam" id="NF000586">
    <property type="entry name" value="PRK00011.1"/>
    <property type="match status" value="1"/>
</dbReference>
<dbReference type="PANTHER" id="PTHR11680">
    <property type="entry name" value="SERINE HYDROXYMETHYLTRANSFERASE"/>
    <property type="match status" value="1"/>
</dbReference>
<dbReference type="PANTHER" id="PTHR11680:SF50">
    <property type="entry name" value="SERINE HYDROXYMETHYLTRANSFERASE"/>
    <property type="match status" value="1"/>
</dbReference>
<dbReference type="Pfam" id="PF00464">
    <property type="entry name" value="SHMT"/>
    <property type="match status" value="1"/>
</dbReference>
<dbReference type="PIRSF" id="PIRSF000412">
    <property type="entry name" value="SHMT"/>
    <property type="match status" value="1"/>
</dbReference>
<dbReference type="SUPFAM" id="SSF53383">
    <property type="entry name" value="PLP-dependent transferases"/>
    <property type="match status" value="1"/>
</dbReference>
<dbReference type="PROSITE" id="PS00096">
    <property type="entry name" value="SHMT"/>
    <property type="match status" value="1"/>
</dbReference>
<name>GLYA_METFK</name>
<sequence>MFSTAKNLSVVDPDLWKYVEAERHRQDEHIELIASENYTSPAVMQAQGSQLTNKYAEGYPGKRFYGGCEFVDGVEQLAIDRLKKLFGAEYANVQPHSGSQANQAVYFSVLKPGDTVMGMNLGHGGHLTHGSPANLSGKLFNIVPYGLNDKEEIDYDEMERIALECKPKLLIGGASAYALRFDWARMADIAKKVGAYFMVDMAHYAGLIAAGVYPNPVPHADFVTSTTHKTLRGPRGGLIMAKAEFEKSLNSSVFPSLQGGPLMHVIAAKAVAFLEAAQPEFKAYQEQVLKNADTMAKTLASRGLRIISGGTQSHVFLVDLRPKGLTGKAADAYLGQAHITVNKNAIPNDPESPFVTSGIRIGSPAITTRGFKEAEAAEVANLIADILDNPTDESVIAATKAKVHALTSRFPVYGA</sequence>
<accession>Q1H003</accession>
<protein>
    <recommendedName>
        <fullName evidence="1">Serine hydroxymethyltransferase</fullName>
        <shortName evidence="1">SHMT</shortName>
        <shortName evidence="1">Serine methylase</shortName>
        <ecNumber evidence="1">2.1.2.1</ecNumber>
    </recommendedName>
</protein>
<evidence type="ECO:0000255" key="1">
    <source>
        <dbReference type="HAMAP-Rule" id="MF_00051"/>
    </source>
</evidence>
<evidence type="ECO:0000305" key="2"/>
<reference key="1">
    <citation type="submission" date="2006-03" db="EMBL/GenBank/DDBJ databases">
        <title>Complete sequence of Methylobacillus flagellatus KT.</title>
        <authorList>
            <consortium name="US DOE Joint Genome Institute"/>
            <person name="Copeland A."/>
            <person name="Lucas S."/>
            <person name="Lapidus A."/>
            <person name="Barry K."/>
            <person name="Detter J.C."/>
            <person name="Glavina del Rio T."/>
            <person name="Hammon N."/>
            <person name="Israni S."/>
            <person name="Dalin E."/>
            <person name="Tice H."/>
            <person name="Pitluck S."/>
            <person name="Brettin T."/>
            <person name="Bruce D."/>
            <person name="Han C."/>
            <person name="Tapia R."/>
            <person name="Saunders E."/>
            <person name="Gilna P."/>
            <person name="Schmutz J."/>
            <person name="Larimer F."/>
            <person name="Land M."/>
            <person name="Kyrpides N."/>
            <person name="Anderson I."/>
            <person name="Richardson P."/>
        </authorList>
    </citation>
    <scope>NUCLEOTIDE SEQUENCE [LARGE SCALE GENOMIC DNA]</scope>
    <source>
        <strain>ATCC 51484 / DSM 6875 / VKM B-1610 / KT</strain>
    </source>
</reference>